<dbReference type="EMBL" id="CP000958">
    <property type="protein sequence ID" value="ACA90013.1"/>
    <property type="molecule type" value="Genomic_DNA"/>
</dbReference>
<dbReference type="RefSeq" id="WP_011544736.1">
    <property type="nucleotide sequence ID" value="NC_010508.1"/>
</dbReference>
<dbReference type="SMR" id="B1JWN9"/>
<dbReference type="GeneID" id="83047628"/>
<dbReference type="KEGG" id="bcm:Bcenmc03_0835"/>
<dbReference type="HOGENOM" id="CLU_057596_1_0_4"/>
<dbReference type="Proteomes" id="UP000002169">
    <property type="component" value="Chromosome 1"/>
</dbReference>
<dbReference type="GO" id="GO:0005829">
    <property type="term" value="C:cytosol"/>
    <property type="evidence" value="ECO:0007669"/>
    <property type="project" value="TreeGrafter"/>
</dbReference>
<dbReference type="Gene3D" id="3.40.1740.10">
    <property type="entry name" value="VC0467-like"/>
    <property type="match status" value="1"/>
</dbReference>
<dbReference type="HAMAP" id="MF_00758">
    <property type="entry name" value="UPF0301"/>
    <property type="match status" value="1"/>
</dbReference>
<dbReference type="InterPro" id="IPR003774">
    <property type="entry name" value="AlgH-like"/>
</dbReference>
<dbReference type="NCBIfam" id="NF001266">
    <property type="entry name" value="PRK00228.1-1"/>
    <property type="match status" value="1"/>
</dbReference>
<dbReference type="NCBIfam" id="NF001267">
    <property type="entry name" value="PRK00228.1-2"/>
    <property type="match status" value="1"/>
</dbReference>
<dbReference type="PANTHER" id="PTHR30327">
    <property type="entry name" value="UNCHARACTERIZED PROTEIN YQGE"/>
    <property type="match status" value="1"/>
</dbReference>
<dbReference type="PANTHER" id="PTHR30327:SF1">
    <property type="entry name" value="UPF0301 PROTEIN YQGE"/>
    <property type="match status" value="1"/>
</dbReference>
<dbReference type="Pfam" id="PF02622">
    <property type="entry name" value="DUF179"/>
    <property type="match status" value="1"/>
</dbReference>
<dbReference type="SUPFAM" id="SSF143456">
    <property type="entry name" value="VC0467-like"/>
    <property type="match status" value="1"/>
</dbReference>
<sequence length="192" mass="20626">MSKPSDRINLTNQFLIAMPNMADPTFSGTVVYLCDHSERGALGLVINRPTDIDLESLFNRIDLKLDIEPLLHIPVYFGGPVQTERGFVLHEPVEGASYNSSMSVDGGLEMTTSKDVLEAVATGTGPKRFLLTLGHAGWGAGQLEEEIARNGWLTVAADPRIVFDTPAEERFEAALGLLGVSSSMLSGEAGHA</sequence>
<evidence type="ECO:0000255" key="1">
    <source>
        <dbReference type="HAMAP-Rule" id="MF_00758"/>
    </source>
</evidence>
<comment type="similarity">
    <text evidence="1">Belongs to the UPF0301 (AlgH) family.</text>
</comment>
<name>Y835_BURO0</name>
<reference key="1">
    <citation type="submission" date="2008-02" db="EMBL/GenBank/DDBJ databases">
        <title>Complete sequence of chromosome 1 of Burkholderia cenocepacia MC0-3.</title>
        <authorList>
            <person name="Copeland A."/>
            <person name="Lucas S."/>
            <person name="Lapidus A."/>
            <person name="Barry K."/>
            <person name="Bruce D."/>
            <person name="Goodwin L."/>
            <person name="Glavina del Rio T."/>
            <person name="Dalin E."/>
            <person name="Tice H."/>
            <person name="Pitluck S."/>
            <person name="Chain P."/>
            <person name="Malfatti S."/>
            <person name="Shin M."/>
            <person name="Vergez L."/>
            <person name="Schmutz J."/>
            <person name="Larimer F."/>
            <person name="Land M."/>
            <person name="Hauser L."/>
            <person name="Kyrpides N."/>
            <person name="Mikhailova N."/>
            <person name="Tiedje J."/>
            <person name="Richardson P."/>
        </authorList>
    </citation>
    <scope>NUCLEOTIDE SEQUENCE [LARGE SCALE GENOMIC DNA]</scope>
    <source>
        <strain>MC0-3</strain>
    </source>
</reference>
<proteinExistence type="inferred from homology"/>
<gene>
    <name type="ordered locus">Bcenmc03_0835</name>
</gene>
<feature type="chain" id="PRO_1000198256" description="UPF0301 protein Bcenmc03_0835">
    <location>
        <begin position="1"/>
        <end position="192"/>
    </location>
</feature>
<accession>B1JWN9</accession>
<organism>
    <name type="scientific">Burkholderia orbicola (strain MC0-3)</name>
    <dbReference type="NCBI Taxonomy" id="406425"/>
    <lineage>
        <taxon>Bacteria</taxon>
        <taxon>Pseudomonadati</taxon>
        <taxon>Pseudomonadota</taxon>
        <taxon>Betaproteobacteria</taxon>
        <taxon>Burkholderiales</taxon>
        <taxon>Burkholderiaceae</taxon>
        <taxon>Burkholderia</taxon>
        <taxon>Burkholderia cepacia complex</taxon>
        <taxon>Burkholderia orbicola</taxon>
    </lineage>
</organism>
<protein>
    <recommendedName>
        <fullName evidence="1">UPF0301 protein Bcenmc03_0835</fullName>
    </recommendedName>
</protein>